<name>ATPE_HAEIG</name>
<dbReference type="EMBL" id="CP000672">
    <property type="protein sequence ID" value="ABR00044.1"/>
    <property type="molecule type" value="Genomic_DNA"/>
</dbReference>
<dbReference type="SMR" id="A5UGY8"/>
<dbReference type="KEGG" id="hiq:CGSHiGG_05645"/>
<dbReference type="HOGENOM" id="CLU_084338_2_0_6"/>
<dbReference type="Proteomes" id="UP000001990">
    <property type="component" value="Chromosome"/>
</dbReference>
<dbReference type="GO" id="GO:0005886">
    <property type="term" value="C:plasma membrane"/>
    <property type="evidence" value="ECO:0007669"/>
    <property type="project" value="UniProtKB-SubCell"/>
</dbReference>
<dbReference type="GO" id="GO:0045259">
    <property type="term" value="C:proton-transporting ATP synthase complex"/>
    <property type="evidence" value="ECO:0007669"/>
    <property type="project" value="UniProtKB-KW"/>
</dbReference>
<dbReference type="GO" id="GO:0005524">
    <property type="term" value="F:ATP binding"/>
    <property type="evidence" value="ECO:0007669"/>
    <property type="project" value="UniProtKB-UniRule"/>
</dbReference>
<dbReference type="GO" id="GO:0046933">
    <property type="term" value="F:proton-transporting ATP synthase activity, rotational mechanism"/>
    <property type="evidence" value="ECO:0007669"/>
    <property type="project" value="UniProtKB-UniRule"/>
</dbReference>
<dbReference type="CDD" id="cd12152">
    <property type="entry name" value="F1-ATPase_delta"/>
    <property type="match status" value="1"/>
</dbReference>
<dbReference type="FunFam" id="2.60.15.10:FF:000001">
    <property type="entry name" value="ATP synthase epsilon chain"/>
    <property type="match status" value="1"/>
</dbReference>
<dbReference type="Gene3D" id="1.20.5.440">
    <property type="entry name" value="ATP synthase delta/epsilon subunit, C-terminal domain"/>
    <property type="match status" value="1"/>
</dbReference>
<dbReference type="Gene3D" id="2.60.15.10">
    <property type="entry name" value="F0F1 ATP synthase delta/epsilon subunit, N-terminal"/>
    <property type="match status" value="1"/>
</dbReference>
<dbReference type="HAMAP" id="MF_00530">
    <property type="entry name" value="ATP_synth_epsil_bac"/>
    <property type="match status" value="1"/>
</dbReference>
<dbReference type="InterPro" id="IPR036794">
    <property type="entry name" value="ATP_F1_dsu/esu_C_sf"/>
</dbReference>
<dbReference type="InterPro" id="IPR001469">
    <property type="entry name" value="ATP_synth_F1_dsu/esu"/>
</dbReference>
<dbReference type="InterPro" id="IPR020546">
    <property type="entry name" value="ATP_synth_F1_dsu/esu_N"/>
</dbReference>
<dbReference type="InterPro" id="IPR036771">
    <property type="entry name" value="ATPsynth_dsu/esu_N"/>
</dbReference>
<dbReference type="NCBIfam" id="TIGR01216">
    <property type="entry name" value="ATP_synt_epsi"/>
    <property type="match status" value="1"/>
</dbReference>
<dbReference type="NCBIfam" id="NF001847">
    <property type="entry name" value="PRK00571.1-4"/>
    <property type="match status" value="1"/>
</dbReference>
<dbReference type="PANTHER" id="PTHR13822">
    <property type="entry name" value="ATP SYNTHASE DELTA/EPSILON CHAIN"/>
    <property type="match status" value="1"/>
</dbReference>
<dbReference type="PANTHER" id="PTHR13822:SF10">
    <property type="entry name" value="ATP SYNTHASE EPSILON CHAIN, CHLOROPLASTIC"/>
    <property type="match status" value="1"/>
</dbReference>
<dbReference type="Pfam" id="PF02823">
    <property type="entry name" value="ATP-synt_DE_N"/>
    <property type="match status" value="1"/>
</dbReference>
<dbReference type="SUPFAM" id="SSF46604">
    <property type="entry name" value="Epsilon subunit of F1F0-ATP synthase C-terminal domain"/>
    <property type="match status" value="1"/>
</dbReference>
<dbReference type="SUPFAM" id="SSF51344">
    <property type="entry name" value="Epsilon subunit of F1F0-ATP synthase N-terminal domain"/>
    <property type="match status" value="1"/>
</dbReference>
<sequence>MATFNLTIVSAEQKIFEGEVKQIQVTGVEGELGILPGHTPLLTAIKPGIVKFTLKDGNEEVIYVSGGFLEVQPNIVTVLADIAIRGSELDADRIHEAKRKAEENIVSRGSDADHDLLVAKLSKELAKLRAYELTEKLLKTRR</sequence>
<keyword id="KW-0066">ATP synthesis</keyword>
<keyword id="KW-0997">Cell inner membrane</keyword>
<keyword id="KW-1003">Cell membrane</keyword>
<keyword id="KW-0139">CF(1)</keyword>
<keyword id="KW-0375">Hydrogen ion transport</keyword>
<keyword id="KW-0406">Ion transport</keyword>
<keyword id="KW-0472">Membrane</keyword>
<keyword id="KW-0813">Transport</keyword>
<evidence type="ECO:0000255" key="1">
    <source>
        <dbReference type="HAMAP-Rule" id="MF_00530"/>
    </source>
</evidence>
<gene>
    <name evidence="1" type="primary">atpC</name>
    <name type="ordered locus">CGSHiGG_05645</name>
</gene>
<comment type="function">
    <text evidence="1">Produces ATP from ADP in the presence of a proton gradient across the membrane.</text>
</comment>
<comment type="subunit">
    <text evidence="1">F-type ATPases have 2 components, CF(1) - the catalytic core - and CF(0) - the membrane proton channel. CF(1) has five subunits: alpha(3), beta(3), gamma(1), delta(1), epsilon(1). CF(0) has three main subunits: a, b and c.</text>
</comment>
<comment type="subcellular location">
    <subcellularLocation>
        <location evidence="1">Cell inner membrane</location>
        <topology evidence="1">Peripheral membrane protein</topology>
    </subcellularLocation>
</comment>
<comment type="similarity">
    <text evidence="1">Belongs to the ATPase epsilon chain family.</text>
</comment>
<organism>
    <name type="scientific">Haemophilus influenzae (strain PittGG)</name>
    <dbReference type="NCBI Taxonomy" id="374931"/>
    <lineage>
        <taxon>Bacteria</taxon>
        <taxon>Pseudomonadati</taxon>
        <taxon>Pseudomonadota</taxon>
        <taxon>Gammaproteobacteria</taxon>
        <taxon>Pasteurellales</taxon>
        <taxon>Pasteurellaceae</taxon>
        <taxon>Haemophilus</taxon>
    </lineage>
</organism>
<proteinExistence type="inferred from homology"/>
<accession>A5UGY8</accession>
<reference key="1">
    <citation type="journal article" date="2007" name="Genome Biol.">
        <title>Characterization and modeling of the Haemophilus influenzae core and supragenomes based on the complete genomic sequences of Rd and 12 clinical nontypeable strains.</title>
        <authorList>
            <person name="Hogg J.S."/>
            <person name="Hu F.Z."/>
            <person name="Janto B."/>
            <person name="Boissy R."/>
            <person name="Hayes J."/>
            <person name="Keefe R."/>
            <person name="Post J.C."/>
            <person name="Ehrlich G.D."/>
        </authorList>
    </citation>
    <scope>NUCLEOTIDE SEQUENCE [LARGE SCALE GENOMIC DNA]</scope>
    <source>
        <strain>PittGG</strain>
    </source>
</reference>
<feature type="chain" id="PRO_1000056487" description="ATP synthase epsilon chain">
    <location>
        <begin position="1"/>
        <end position="142"/>
    </location>
</feature>
<protein>
    <recommendedName>
        <fullName evidence="1">ATP synthase epsilon chain</fullName>
    </recommendedName>
    <alternativeName>
        <fullName evidence="1">ATP synthase F1 sector epsilon subunit</fullName>
    </alternativeName>
    <alternativeName>
        <fullName evidence="1">F-ATPase epsilon subunit</fullName>
    </alternativeName>
</protein>